<accession>Q8F0X6</accession>
<feature type="chain" id="PRO_0000156942" description="Hydroxyethylthiazole kinase">
    <location>
        <begin position="1"/>
        <end position="265"/>
    </location>
</feature>
<feature type="binding site" evidence="1">
    <location>
        <position position="55"/>
    </location>
    <ligand>
        <name>substrate</name>
    </ligand>
</feature>
<feature type="binding site" evidence="1">
    <location>
        <position position="130"/>
    </location>
    <ligand>
        <name>ATP</name>
        <dbReference type="ChEBI" id="CHEBI:30616"/>
    </ligand>
</feature>
<feature type="binding site" evidence="1">
    <location>
        <position position="176"/>
    </location>
    <ligand>
        <name>ATP</name>
        <dbReference type="ChEBI" id="CHEBI:30616"/>
    </ligand>
</feature>
<feature type="binding site" evidence="1">
    <location>
        <position position="203"/>
    </location>
    <ligand>
        <name>substrate</name>
    </ligand>
</feature>
<comment type="function">
    <text evidence="1">Catalyzes the phosphorylation of the hydroxyl group of 4-methyl-5-beta-hydroxyethylthiazole (THZ).</text>
</comment>
<comment type="catalytic activity">
    <reaction evidence="1">
        <text>5-(2-hydroxyethyl)-4-methylthiazole + ATP = 4-methyl-5-(2-phosphooxyethyl)-thiazole + ADP + H(+)</text>
        <dbReference type="Rhea" id="RHEA:24212"/>
        <dbReference type="ChEBI" id="CHEBI:15378"/>
        <dbReference type="ChEBI" id="CHEBI:17957"/>
        <dbReference type="ChEBI" id="CHEBI:30616"/>
        <dbReference type="ChEBI" id="CHEBI:58296"/>
        <dbReference type="ChEBI" id="CHEBI:456216"/>
        <dbReference type="EC" id="2.7.1.50"/>
    </reaction>
</comment>
<comment type="cofactor">
    <cofactor evidence="1">
        <name>Mg(2+)</name>
        <dbReference type="ChEBI" id="CHEBI:18420"/>
    </cofactor>
</comment>
<comment type="pathway">
    <text evidence="1">Cofactor biosynthesis; thiamine diphosphate biosynthesis; 4-methyl-5-(2-phosphoethyl)-thiazole from 5-(2-hydroxyethyl)-4-methylthiazole: step 1/1.</text>
</comment>
<comment type="similarity">
    <text evidence="1">Belongs to the Thz kinase family.</text>
</comment>
<evidence type="ECO:0000255" key="1">
    <source>
        <dbReference type="HAMAP-Rule" id="MF_00228"/>
    </source>
</evidence>
<gene>
    <name evidence="1" type="primary">thiM</name>
    <name type="ordered locus">LA_3365</name>
</gene>
<name>THIM_LEPIN</name>
<dbReference type="EC" id="2.7.1.50" evidence="1"/>
<dbReference type="EMBL" id="AE010300">
    <property type="protein sequence ID" value="AAN50563.1"/>
    <property type="molecule type" value="Genomic_DNA"/>
</dbReference>
<dbReference type="RefSeq" id="NP_713545.1">
    <property type="nucleotide sequence ID" value="NC_004342.2"/>
</dbReference>
<dbReference type="RefSeq" id="WP_000047875.1">
    <property type="nucleotide sequence ID" value="NC_004342.2"/>
</dbReference>
<dbReference type="SMR" id="Q8F0X6"/>
<dbReference type="FunCoup" id="Q8F0X6">
    <property type="interactions" value="160"/>
</dbReference>
<dbReference type="STRING" id="189518.LA_3365"/>
<dbReference type="PaxDb" id="189518-LA_3365"/>
<dbReference type="EnsemblBacteria" id="AAN50563">
    <property type="protein sequence ID" value="AAN50563"/>
    <property type="gene ID" value="LA_3365"/>
</dbReference>
<dbReference type="KEGG" id="lil:LA_3365"/>
<dbReference type="PATRIC" id="fig|189518.3.peg.3333"/>
<dbReference type="HOGENOM" id="CLU_019943_0_1_12"/>
<dbReference type="InParanoid" id="Q8F0X6"/>
<dbReference type="OrthoDB" id="9778146at2"/>
<dbReference type="UniPathway" id="UPA00060">
    <property type="reaction ID" value="UER00139"/>
</dbReference>
<dbReference type="Proteomes" id="UP000001408">
    <property type="component" value="Chromosome I"/>
</dbReference>
<dbReference type="GO" id="GO:0005524">
    <property type="term" value="F:ATP binding"/>
    <property type="evidence" value="ECO:0007669"/>
    <property type="project" value="UniProtKB-UniRule"/>
</dbReference>
<dbReference type="GO" id="GO:0004417">
    <property type="term" value="F:hydroxyethylthiazole kinase activity"/>
    <property type="evidence" value="ECO:0007669"/>
    <property type="project" value="UniProtKB-UniRule"/>
</dbReference>
<dbReference type="GO" id="GO:0000287">
    <property type="term" value="F:magnesium ion binding"/>
    <property type="evidence" value="ECO:0007669"/>
    <property type="project" value="UniProtKB-UniRule"/>
</dbReference>
<dbReference type="GO" id="GO:0009228">
    <property type="term" value="P:thiamine biosynthetic process"/>
    <property type="evidence" value="ECO:0007669"/>
    <property type="project" value="UniProtKB-KW"/>
</dbReference>
<dbReference type="GO" id="GO:0009229">
    <property type="term" value="P:thiamine diphosphate biosynthetic process"/>
    <property type="evidence" value="ECO:0007669"/>
    <property type="project" value="UniProtKB-UniRule"/>
</dbReference>
<dbReference type="CDD" id="cd01170">
    <property type="entry name" value="THZ_kinase"/>
    <property type="match status" value="1"/>
</dbReference>
<dbReference type="Gene3D" id="3.40.1190.20">
    <property type="match status" value="1"/>
</dbReference>
<dbReference type="HAMAP" id="MF_00228">
    <property type="entry name" value="Thz_kinase"/>
    <property type="match status" value="1"/>
</dbReference>
<dbReference type="InterPro" id="IPR000417">
    <property type="entry name" value="Hyethyz_kinase"/>
</dbReference>
<dbReference type="InterPro" id="IPR029056">
    <property type="entry name" value="Ribokinase-like"/>
</dbReference>
<dbReference type="NCBIfam" id="NF006830">
    <property type="entry name" value="PRK09355.1"/>
    <property type="match status" value="1"/>
</dbReference>
<dbReference type="NCBIfam" id="TIGR00694">
    <property type="entry name" value="thiM"/>
    <property type="match status" value="1"/>
</dbReference>
<dbReference type="Pfam" id="PF02110">
    <property type="entry name" value="HK"/>
    <property type="match status" value="1"/>
</dbReference>
<dbReference type="PIRSF" id="PIRSF000513">
    <property type="entry name" value="Thz_kinase"/>
    <property type="match status" value="1"/>
</dbReference>
<dbReference type="PRINTS" id="PR01099">
    <property type="entry name" value="HYETHTZKNASE"/>
</dbReference>
<dbReference type="SUPFAM" id="SSF53613">
    <property type="entry name" value="Ribokinase-like"/>
    <property type="match status" value="1"/>
</dbReference>
<keyword id="KW-0067">ATP-binding</keyword>
<keyword id="KW-0418">Kinase</keyword>
<keyword id="KW-0460">Magnesium</keyword>
<keyword id="KW-0479">Metal-binding</keyword>
<keyword id="KW-0547">Nucleotide-binding</keyword>
<keyword id="KW-1185">Reference proteome</keyword>
<keyword id="KW-0784">Thiamine biosynthesis</keyword>
<keyword id="KW-0808">Transferase</keyword>
<organism>
    <name type="scientific">Leptospira interrogans serogroup Icterohaemorrhagiae serovar Lai (strain 56601)</name>
    <dbReference type="NCBI Taxonomy" id="189518"/>
    <lineage>
        <taxon>Bacteria</taxon>
        <taxon>Pseudomonadati</taxon>
        <taxon>Spirochaetota</taxon>
        <taxon>Spirochaetia</taxon>
        <taxon>Leptospirales</taxon>
        <taxon>Leptospiraceae</taxon>
        <taxon>Leptospira</taxon>
    </lineage>
</organism>
<sequence>MSKTTIIERIWPAKEIIEDLSELRKQSPLTHVITNIVVTNWTANVLLAIGSSPAMVIAKEEAGEFAKIASGLLINIGTVTSNDAITMKIAAEAAHQAKIPWVLDPVAVGALGFRTELAKELLNFKPTVIRGNASEILALAGTDGGGKGVDSTALSSDALPLAQMLAEKTGAVIAISGEIDYVTNGKETISISGGDPIMTKVTGVGCSLGGVIASFLGVQKDPLRATASASAVFAIAGTRSAKISKGSGSFAVNFLDQLNLLSTEK</sequence>
<proteinExistence type="inferred from homology"/>
<protein>
    <recommendedName>
        <fullName evidence="1">Hydroxyethylthiazole kinase</fullName>
        <ecNumber evidence="1">2.7.1.50</ecNumber>
    </recommendedName>
    <alternativeName>
        <fullName evidence="1">4-methyl-5-beta-hydroxyethylthiazole kinase</fullName>
        <shortName evidence="1">TH kinase</shortName>
        <shortName evidence="1">Thz kinase</shortName>
    </alternativeName>
</protein>
<reference key="1">
    <citation type="journal article" date="2003" name="Nature">
        <title>Unique physiological and pathogenic features of Leptospira interrogans revealed by whole-genome sequencing.</title>
        <authorList>
            <person name="Ren S.-X."/>
            <person name="Fu G."/>
            <person name="Jiang X.-G."/>
            <person name="Zeng R."/>
            <person name="Miao Y.-G."/>
            <person name="Xu H."/>
            <person name="Zhang Y.-X."/>
            <person name="Xiong H."/>
            <person name="Lu G."/>
            <person name="Lu L.-F."/>
            <person name="Jiang H.-Q."/>
            <person name="Jia J."/>
            <person name="Tu Y.-F."/>
            <person name="Jiang J.-X."/>
            <person name="Gu W.-Y."/>
            <person name="Zhang Y.-Q."/>
            <person name="Cai Z."/>
            <person name="Sheng H.-H."/>
            <person name="Yin H.-F."/>
            <person name="Zhang Y."/>
            <person name="Zhu G.-F."/>
            <person name="Wan M."/>
            <person name="Huang H.-L."/>
            <person name="Qian Z."/>
            <person name="Wang S.-Y."/>
            <person name="Ma W."/>
            <person name="Yao Z.-J."/>
            <person name="Shen Y."/>
            <person name="Qiang B.-Q."/>
            <person name="Xia Q.-C."/>
            <person name="Guo X.-K."/>
            <person name="Danchin A."/>
            <person name="Saint Girons I."/>
            <person name="Somerville R.L."/>
            <person name="Wen Y.-M."/>
            <person name="Shi M.-H."/>
            <person name="Chen Z."/>
            <person name="Xu J.-G."/>
            <person name="Zhao G.-P."/>
        </authorList>
    </citation>
    <scope>NUCLEOTIDE SEQUENCE [LARGE SCALE GENOMIC DNA]</scope>
    <source>
        <strain>56601</strain>
    </source>
</reference>